<accession>A9N2D1</accession>
<dbReference type="EC" id="5.4.99.27" evidence="1"/>
<dbReference type="EMBL" id="CP000886">
    <property type="protein sequence ID" value="ABX68982.1"/>
    <property type="molecule type" value="Genomic_DNA"/>
</dbReference>
<dbReference type="RefSeq" id="WP_000134246.1">
    <property type="nucleotide sequence ID" value="NC_010102.1"/>
</dbReference>
<dbReference type="SMR" id="A9N2D1"/>
<dbReference type="KEGG" id="spq:SPAB_03642"/>
<dbReference type="PATRIC" id="fig|1016998.12.peg.3429"/>
<dbReference type="HOGENOM" id="CLU_005281_4_0_6"/>
<dbReference type="BioCyc" id="SENT1016998:SPAB_RS14840-MONOMER"/>
<dbReference type="Proteomes" id="UP000008556">
    <property type="component" value="Chromosome"/>
</dbReference>
<dbReference type="GO" id="GO:0005829">
    <property type="term" value="C:cytosol"/>
    <property type="evidence" value="ECO:0007669"/>
    <property type="project" value="TreeGrafter"/>
</dbReference>
<dbReference type="GO" id="GO:0003723">
    <property type="term" value="F:RNA binding"/>
    <property type="evidence" value="ECO:0007669"/>
    <property type="project" value="InterPro"/>
</dbReference>
<dbReference type="GO" id="GO:0160150">
    <property type="term" value="F:tRNA pseudouridine(13) synthase activity"/>
    <property type="evidence" value="ECO:0007669"/>
    <property type="project" value="UniProtKB-EC"/>
</dbReference>
<dbReference type="GO" id="GO:0031119">
    <property type="term" value="P:tRNA pseudouridine synthesis"/>
    <property type="evidence" value="ECO:0007669"/>
    <property type="project" value="UniProtKB-UniRule"/>
</dbReference>
<dbReference type="CDD" id="cd02575">
    <property type="entry name" value="PseudoU_synth_EcTruD"/>
    <property type="match status" value="1"/>
</dbReference>
<dbReference type="FunFam" id="3.30.2340.10:FF:000001">
    <property type="entry name" value="tRNA pseudouridine synthase D"/>
    <property type="match status" value="1"/>
</dbReference>
<dbReference type="FunFam" id="3.30.2350.20:FF:000001">
    <property type="entry name" value="tRNA pseudouridine synthase D"/>
    <property type="match status" value="1"/>
</dbReference>
<dbReference type="Gene3D" id="3.30.2350.20">
    <property type="entry name" value="TruD, catalytic domain"/>
    <property type="match status" value="1"/>
</dbReference>
<dbReference type="Gene3D" id="3.30.2340.10">
    <property type="entry name" value="TruD, insertion domain"/>
    <property type="match status" value="1"/>
</dbReference>
<dbReference type="HAMAP" id="MF_01082">
    <property type="entry name" value="TruD"/>
    <property type="match status" value="1"/>
</dbReference>
<dbReference type="InterPro" id="IPR020103">
    <property type="entry name" value="PsdUridine_synth_cat_dom_sf"/>
</dbReference>
<dbReference type="InterPro" id="IPR001656">
    <property type="entry name" value="PsdUridine_synth_TruD"/>
</dbReference>
<dbReference type="InterPro" id="IPR020119">
    <property type="entry name" value="PsdUridine_synth_TruD_CS"/>
</dbReference>
<dbReference type="InterPro" id="IPR011760">
    <property type="entry name" value="PsdUridine_synth_TruD_insert"/>
</dbReference>
<dbReference type="InterPro" id="IPR042214">
    <property type="entry name" value="TruD_catalytic"/>
</dbReference>
<dbReference type="InterPro" id="IPR043165">
    <property type="entry name" value="TruD_insert_sf"/>
</dbReference>
<dbReference type="InterPro" id="IPR050170">
    <property type="entry name" value="TruD_pseudoU_synthase"/>
</dbReference>
<dbReference type="NCBIfam" id="NF002155">
    <property type="entry name" value="PRK00984.1-4"/>
    <property type="match status" value="1"/>
</dbReference>
<dbReference type="NCBIfam" id="TIGR00094">
    <property type="entry name" value="tRNA_TruD_broad"/>
    <property type="match status" value="1"/>
</dbReference>
<dbReference type="PANTHER" id="PTHR47811">
    <property type="entry name" value="TRNA PSEUDOURIDINE SYNTHASE D"/>
    <property type="match status" value="1"/>
</dbReference>
<dbReference type="PANTHER" id="PTHR47811:SF1">
    <property type="entry name" value="TRNA PSEUDOURIDINE SYNTHASE D"/>
    <property type="match status" value="1"/>
</dbReference>
<dbReference type="Pfam" id="PF01142">
    <property type="entry name" value="TruD"/>
    <property type="match status" value="2"/>
</dbReference>
<dbReference type="SUPFAM" id="SSF55120">
    <property type="entry name" value="Pseudouridine synthase"/>
    <property type="match status" value="1"/>
</dbReference>
<dbReference type="PROSITE" id="PS50984">
    <property type="entry name" value="TRUD"/>
    <property type="match status" value="1"/>
</dbReference>
<dbReference type="PROSITE" id="PS01268">
    <property type="entry name" value="UPF0024"/>
    <property type="match status" value="1"/>
</dbReference>
<keyword id="KW-0413">Isomerase</keyword>
<keyword id="KW-0819">tRNA processing</keyword>
<sequence length="349" mass="39333">MTEFDNLTWLHGKPQGSGLLKANPEDFVVVEDLGFTPDGEGEHILLRILKNGCNTRFVADALAKFLKIHAREVSFAGQKDKHAVTEQWLCARVPGKEMPDFSAFQLEGCKVLEYARHKRKLRLGALKGNAFTLVLREISDRRDVETRLQAIRDGGVPNYFGAQRFGIGGSNLQGALRWAQSNAPVRDRNKRSFWLSAARSALFNQIVHQRLKKPDFNQVVDGDALQLAGRGSWFVATSEELPELQRRVDEKELMITASLPGSGEWGTQRAALAFEQDAIAQETVLQSLLLREKVEASRRAMLLYPQQLSWNWWDDVTVELRFWLPAGSFATSVVRELINTMGDYAHIAE</sequence>
<proteinExistence type="inferred from homology"/>
<name>TRUD_SALPB</name>
<feature type="chain" id="PRO_1000084764" description="tRNA pseudouridine synthase D">
    <location>
        <begin position="1"/>
        <end position="349"/>
    </location>
</feature>
<feature type="domain" description="TRUD" evidence="1">
    <location>
        <begin position="155"/>
        <end position="303"/>
    </location>
</feature>
<feature type="active site" description="Nucleophile" evidence="1">
    <location>
        <position position="80"/>
    </location>
</feature>
<feature type="binding site" evidence="1">
    <location>
        <position position="27"/>
    </location>
    <ligand>
        <name>substrate</name>
    </ligand>
</feature>
<feature type="binding site" evidence="1">
    <location>
        <position position="129"/>
    </location>
    <ligand>
        <name>substrate</name>
    </ligand>
</feature>
<feature type="binding site" evidence="1">
    <location>
        <position position="329"/>
    </location>
    <ligand>
        <name>substrate</name>
    </ligand>
</feature>
<gene>
    <name evidence="1" type="primary">truD</name>
    <name type="ordered locus">SPAB_03642</name>
</gene>
<comment type="function">
    <text evidence="1">Responsible for synthesis of pseudouridine from uracil-13 in transfer RNAs.</text>
</comment>
<comment type="catalytic activity">
    <reaction evidence="1">
        <text>uridine(13) in tRNA = pseudouridine(13) in tRNA</text>
        <dbReference type="Rhea" id="RHEA:42540"/>
        <dbReference type="Rhea" id="RHEA-COMP:10105"/>
        <dbReference type="Rhea" id="RHEA-COMP:10106"/>
        <dbReference type="ChEBI" id="CHEBI:65314"/>
        <dbReference type="ChEBI" id="CHEBI:65315"/>
        <dbReference type="EC" id="5.4.99.27"/>
    </reaction>
</comment>
<comment type="similarity">
    <text evidence="1">Belongs to the pseudouridine synthase TruD family.</text>
</comment>
<protein>
    <recommendedName>
        <fullName evidence="1">tRNA pseudouridine synthase D</fullName>
        <ecNumber evidence="1">5.4.99.27</ecNumber>
    </recommendedName>
    <alternativeName>
        <fullName evidence="1">tRNA pseudouridine(13) synthase</fullName>
    </alternativeName>
    <alternativeName>
        <fullName evidence="1">tRNA pseudouridylate synthase D</fullName>
    </alternativeName>
    <alternativeName>
        <fullName evidence="1">tRNA-uridine isomerase D</fullName>
    </alternativeName>
</protein>
<evidence type="ECO:0000255" key="1">
    <source>
        <dbReference type="HAMAP-Rule" id="MF_01082"/>
    </source>
</evidence>
<reference key="1">
    <citation type="submission" date="2007-11" db="EMBL/GenBank/DDBJ databases">
        <authorList>
            <consortium name="The Salmonella enterica serovar Paratyphi B Genome Sequencing Project"/>
            <person name="McClelland M."/>
            <person name="Sanderson E.K."/>
            <person name="Porwollik S."/>
            <person name="Spieth J."/>
            <person name="Clifton W.S."/>
            <person name="Fulton R."/>
            <person name="Cordes M."/>
            <person name="Wollam A."/>
            <person name="Shah N."/>
            <person name="Pepin K."/>
            <person name="Bhonagiri V."/>
            <person name="Nash W."/>
            <person name="Johnson M."/>
            <person name="Thiruvilangam P."/>
            <person name="Wilson R."/>
        </authorList>
    </citation>
    <scope>NUCLEOTIDE SEQUENCE [LARGE SCALE GENOMIC DNA]</scope>
    <source>
        <strain>ATCC BAA-1250 / SPB7</strain>
    </source>
</reference>
<organism>
    <name type="scientific">Salmonella paratyphi B (strain ATCC BAA-1250 / SPB7)</name>
    <dbReference type="NCBI Taxonomy" id="1016998"/>
    <lineage>
        <taxon>Bacteria</taxon>
        <taxon>Pseudomonadati</taxon>
        <taxon>Pseudomonadota</taxon>
        <taxon>Gammaproteobacteria</taxon>
        <taxon>Enterobacterales</taxon>
        <taxon>Enterobacteriaceae</taxon>
        <taxon>Salmonella</taxon>
    </lineage>
</organism>